<proteinExistence type="evidence at transcript level"/>
<evidence type="ECO:0000255" key="1">
    <source>
        <dbReference type="HAMAP-Rule" id="MF_01471"/>
    </source>
</evidence>
<evidence type="ECO:0000269" key="2">
    <source>
    </source>
</evidence>
<evidence type="ECO:0000305" key="3">
    <source>
    </source>
</evidence>
<evidence type="ECO:0000312" key="4">
    <source>
        <dbReference type="EMBL" id="ABK89650.1"/>
    </source>
</evidence>
<dbReference type="EC" id="3.1.-.-" evidence="1"/>
<dbReference type="EMBL" id="CP000439">
    <property type="protein sequence ID" value="ABK89650.1"/>
    <property type="molecule type" value="Genomic_DNA"/>
</dbReference>
<dbReference type="SMR" id="A0Q5Y5"/>
<dbReference type="KEGG" id="ftn:FTN_0759"/>
<dbReference type="KEGG" id="ftx:AW25_1262"/>
<dbReference type="BioCyc" id="FTUL401614:G1G75-791-MONOMER"/>
<dbReference type="Proteomes" id="UP000000762">
    <property type="component" value="Chromosome"/>
</dbReference>
<dbReference type="GO" id="GO:0046872">
    <property type="term" value="F:metal ion binding"/>
    <property type="evidence" value="ECO:0007669"/>
    <property type="project" value="UniProtKB-UniRule"/>
</dbReference>
<dbReference type="GO" id="GO:0004521">
    <property type="term" value="F:RNA endonuclease activity"/>
    <property type="evidence" value="ECO:0007669"/>
    <property type="project" value="InterPro"/>
</dbReference>
<dbReference type="GO" id="GO:0051607">
    <property type="term" value="P:defense response to virus"/>
    <property type="evidence" value="ECO:0007669"/>
    <property type="project" value="UniProtKB-UniRule"/>
</dbReference>
<dbReference type="GO" id="GO:0043571">
    <property type="term" value="P:maintenance of CRISPR repeat elements"/>
    <property type="evidence" value="ECO:0007669"/>
    <property type="project" value="UniProtKB-UniRule"/>
</dbReference>
<dbReference type="CDD" id="cd09725">
    <property type="entry name" value="Cas2_I_II_III"/>
    <property type="match status" value="1"/>
</dbReference>
<dbReference type="Gene3D" id="3.30.70.240">
    <property type="match status" value="1"/>
</dbReference>
<dbReference type="HAMAP" id="MF_01471">
    <property type="entry name" value="Cas2"/>
    <property type="match status" value="1"/>
</dbReference>
<dbReference type="InterPro" id="IPR021127">
    <property type="entry name" value="CRISPR_associated_Cas2"/>
</dbReference>
<dbReference type="InterPro" id="IPR019199">
    <property type="entry name" value="Virulence_VapD/CRISPR_Cas2"/>
</dbReference>
<dbReference type="NCBIfam" id="TIGR01573">
    <property type="entry name" value="cas2"/>
    <property type="match status" value="1"/>
</dbReference>
<dbReference type="Pfam" id="PF09827">
    <property type="entry name" value="CRISPR_Cas2"/>
    <property type="match status" value="1"/>
</dbReference>
<dbReference type="SUPFAM" id="SSF143430">
    <property type="entry name" value="TTP0101/SSO1404-like"/>
    <property type="match status" value="1"/>
</dbReference>
<comment type="function">
    <text evidence="1">CRISPR (clustered regularly interspaced short palindromic repeat) is an adaptive immune system that provides protection against mobile genetic elements (viruses, transposable elements and conjugative plasmids). CRISPR clusters contain sequences complementary to antecedent mobile elements and target invading nucleic acids. CRISPR clusters are transcribed and processed into CRISPR RNA (crRNA). Functions as a ssRNA-specific endoribonuclease. Involved in the integration of spacer DNA into the CRISPR cassette.</text>
</comment>
<comment type="cofactor">
    <cofactor evidence="1">
        <name>Mg(2+)</name>
        <dbReference type="ChEBI" id="CHEBI:18420"/>
    </cofactor>
</comment>
<comment type="subunit">
    <text evidence="1">Homodimer, forms a heterotetramer with a Cas1 homodimer.</text>
</comment>
<comment type="induction">
    <text evidence="2">In culture expression is high during mid-log phase (2 hour), then decreases to nearly undetectable levels in late stationary phase (16 hours). During infection of mouse bone marrow-derived macrophages (BMDM) expression is maximal after 1 hour, when the bacteria is expected to be in the phagosome.</text>
</comment>
<comment type="disruption phenotype">
    <text evidence="2">No effect on expression of bacterial lipoprotein FTN_1103. Bacteria are as virulent in mice as wild-type bacteria.</text>
</comment>
<comment type="miscellaneous">
    <text evidence="3">Part of a type II CRISPR-Cas system.</text>
</comment>
<comment type="similarity">
    <text evidence="1">Belongs to the CRISPR-associated endoribonuclease Cas2 protein family.</text>
</comment>
<feature type="chain" id="PRO_0000436105" description="CRISPR-associated endoribonuclease Cas2 1">
    <location>
        <begin position="1"/>
        <end position="97"/>
    </location>
</feature>
<feature type="binding site" evidence="1">
    <location>
        <position position="12"/>
    </location>
    <ligand>
        <name>Mg(2+)</name>
        <dbReference type="ChEBI" id="CHEBI:18420"/>
        <note>catalytic</note>
    </ligand>
</feature>
<sequence length="97" mass="11555">MQLRKEYLIAYDIEDNKTRTIIYKQLLAYGLKAVQKSVFWGYVSIAELNAIKRLFDSSLTISDKVFITRVNMHEQKLDYSFGYDDKTFKDWDEYGHI</sequence>
<protein>
    <recommendedName>
        <fullName evidence="1">CRISPR-associated endoribonuclease Cas2 1</fullName>
        <ecNumber evidence="1">3.1.-.-</ecNumber>
    </recommendedName>
</protein>
<keyword id="KW-0051">Antiviral defense</keyword>
<keyword id="KW-0255">Endonuclease</keyword>
<keyword id="KW-0378">Hydrolase</keyword>
<keyword id="KW-0460">Magnesium</keyword>
<keyword id="KW-0479">Metal-binding</keyword>
<keyword id="KW-0540">Nuclease</keyword>
<gene>
    <name evidence="1" type="primary">cas2-1</name>
    <name evidence="4" type="ordered locus">FTN_0759</name>
</gene>
<organism>
    <name type="scientific">Francisella tularensis subsp. novicida (strain U112)</name>
    <dbReference type="NCBI Taxonomy" id="401614"/>
    <lineage>
        <taxon>Bacteria</taxon>
        <taxon>Pseudomonadati</taxon>
        <taxon>Pseudomonadota</taxon>
        <taxon>Gammaproteobacteria</taxon>
        <taxon>Thiotrichales</taxon>
        <taxon>Francisellaceae</taxon>
        <taxon>Francisella</taxon>
    </lineage>
</organism>
<reference key="1">
    <citation type="journal article" date="2007" name="Genome Biol.">
        <title>Comparison of Francisella tularensis genomes reveals evolutionary events associated with the emergence of human pathogenic strains.</title>
        <authorList>
            <person name="Rohmer L."/>
            <person name="Fong C."/>
            <person name="Abmayr S."/>
            <person name="Wasnick M."/>
            <person name="Larson Freeman T.J."/>
            <person name="Radey M."/>
            <person name="Guina T."/>
            <person name="Svensson K."/>
            <person name="Hayden H.S."/>
            <person name="Jacobs M."/>
            <person name="Gallagher L.A."/>
            <person name="Manoil C."/>
            <person name="Ernst R.K."/>
            <person name="Drees B."/>
            <person name="Buckley D."/>
            <person name="Haugen E."/>
            <person name="Bovee D."/>
            <person name="Zhou Y."/>
            <person name="Chang J."/>
            <person name="Levy R."/>
            <person name="Lim R."/>
            <person name="Gillett W."/>
            <person name="Guenthener D."/>
            <person name="Kang A."/>
            <person name="Shaffer S.A."/>
            <person name="Taylor G."/>
            <person name="Chen J."/>
            <person name="Gallis B."/>
            <person name="D'Argenio D.A."/>
            <person name="Forsman M."/>
            <person name="Olson M.V."/>
            <person name="Goodlett D.R."/>
            <person name="Kaul R."/>
            <person name="Miller S.I."/>
            <person name="Brittnacher M.J."/>
        </authorList>
    </citation>
    <scope>NUCLEOTIDE SEQUENCE [LARGE SCALE GENOMIC DNA]</scope>
    <source>
        <strain>U112</strain>
    </source>
</reference>
<reference key="2">
    <citation type="journal article" date="2013" name="Nature">
        <title>A CRISPR/Cas system mediates bacterial innate immune evasion and virulence.</title>
        <authorList>
            <person name="Sampson T.R."/>
            <person name="Saroj S.D."/>
            <person name="Llewellyn A.C."/>
            <person name="Tzeng Y.L."/>
            <person name="Weiss D.S."/>
        </authorList>
    </citation>
    <scope>INDUCTION</scope>
    <scope>DISRUPTION PHENOTYPE</scope>
    <source>
        <strain>U112</strain>
    </source>
</reference>
<reference key="3">
    <citation type="journal article" date="2013" name="Nature">
        <authorList>
            <person name="Sampson T.R."/>
            <person name="Saroj S.D."/>
            <person name="Llewellyn A.C."/>
            <person name="Tzeng Y.L."/>
            <person name="Weiss D.S."/>
        </authorList>
    </citation>
    <scope>ERRATUM OF PUBMED:23584588</scope>
</reference>
<name>CAS2A_FRATN</name>
<accession>A0Q5Y5</accession>